<keyword id="KW-0106">Calcium</keyword>
<keyword id="KW-0903">Direct protein sequencing</keyword>
<keyword id="KW-0464">Manganese</keyword>
<keyword id="KW-0479">Metal-binding</keyword>
<keyword id="KW-0560">Oxidoreductase</keyword>
<keyword id="KW-0575">Peroxidase</keyword>
<keyword id="KW-1185">Reference proteome</keyword>
<keyword id="KW-0346">Stress response</keyword>
<feature type="chain" id="PRO_0000096153" description="Manganese catalase">
    <location>
        <begin position="1"/>
        <end position="273"/>
    </location>
</feature>
<feature type="region of interest" description="Disordered" evidence="3">
    <location>
        <begin position="254"/>
        <end position="273"/>
    </location>
</feature>
<feature type="binding site" evidence="2">
    <location>
        <position position="35"/>
    </location>
    <ligand>
        <name>Mn(2+)</name>
        <dbReference type="ChEBI" id="CHEBI:29035"/>
        <label>1</label>
    </ligand>
</feature>
<feature type="binding site" evidence="2">
    <location>
        <position position="57"/>
    </location>
    <ligand>
        <name>Ca(2+)</name>
        <dbReference type="ChEBI" id="CHEBI:29108"/>
    </ligand>
</feature>
<feature type="binding site" evidence="2">
    <location>
        <position position="61"/>
    </location>
    <ligand>
        <name>Ca(2+)</name>
        <dbReference type="ChEBI" id="CHEBI:29108"/>
    </ligand>
</feature>
<feature type="binding site" evidence="2">
    <location>
        <position position="66"/>
    </location>
    <ligand>
        <name>Mn(2+)</name>
        <dbReference type="ChEBI" id="CHEBI:29035"/>
        <label>1</label>
    </ligand>
</feature>
<feature type="binding site" evidence="2">
    <location>
        <position position="66"/>
    </location>
    <ligand>
        <name>Mn(2+)</name>
        <dbReference type="ChEBI" id="CHEBI:29035"/>
        <label>2</label>
    </ligand>
</feature>
<feature type="binding site" evidence="2">
    <location>
        <position position="69"/>
    </location>
    <ligand>
        <name>Mn(2+)</name>
        <dbReference type="ChEBI" id="CHEBI:29035"/>
        <label>1</label>
    </ligand>
</feature>
<feature type="binding site" evidence="2">
    <location>
        <position position="149"/>
    </location>
    <ligand>
        <name>Mn(2+)</name>
        <dbReference type="ChEBI" id="CHEBI:29035"/>
        <label>2</label>
    </ligand>
</feature>
<feature type="binding site" evidence="2">
    <location>
        <position position="182"/>
    </location>
    <ligand>
        <name>Mn(2+)</name>
        <dbReference type="ChEBI" id="CHEBI:29035"/>
        <label>2</label>
    </ligand>
</feature>
<feature type="binding site" evidence="2">
    <location>
        <position position="220"/>
    </location>
    <ligand>
        <name>Ca(2+)</name>
        <dbReference type="ChEBI" id="CHEBI:29108"/>
    </ligand>
</feature>
<feature type="binding site" evidence="2">
    <location>
        <position position="222"/>
    </location>
    <ligand>
        <name>Ca(2+)</name>
        <dbReference type="ChEBI" id="CHEBI:29108"/>
    </ligand>
</feature>
<feature type="binding site" evidence="2">
    <location>
        <position position="224"/>
    </location>
    <ligand>
        <name>Ca(2+)</name>
        <dbReference type="ChEBI" id="CHEBI:29108"/>
    </ligand>
</feature>
<proteinExistence type="evidence at protein level"/>
<protein>
    <recommendedName>
        <fullName evidence="1">Manganese catalase</fullName>
        <ecNumber evidence="1">1.11.1.6</ecNumber>
    </recommendedName>
    <alternativeName>
        <fullName>General stress protein 80</fullName>
        <shortName>GSP80</shortName>
    </alternativeName>
</protein>
<accession>P80878</accession>
<accession>P96599</accession>
<name>MCAT_BACSU</name>
<comment type="function">
    <text evidence="1">Catalyzes the decomposition of hydrogen peroxide into water and oxygen.</text>
</comment>
<comment type="catalytic activity">
    <reaction evidence="1">
        <text>2 H2O2 = O2 + 2 H2O</text>
        <dbReference type="Rhea" id="RHEA:20309"/>
        <dbReference type="ChEBI" id="CHEBI:15377"/>
        <dbReference type="ChEBI" id="CHEBI:15379"/>
        <dbReference type="ChEBI" id="CHEBI:16240"/>
        <dbReference type="EC" id="1.11.1.6"/>
    </reaction>
</comment>
<comment type="cofactor">
    <cofactor evidence="2">
        <name>Ca(2+)</name>
        <dbReference type="ChEBI" id="CHEBI:29108"/>
    </cofactor>
    <text evidence="2">Binds 1 Ca(2+) ion per subunit.</text>
</comment>
<comment type="cofactor">
    <cofactor evidence="2">
        <name>Mn(2+)</name>
        <dbReference type="ChEBI" id="CHEBI:29035"/>
    </cofactor>
    <text evidence="2">Binds 2 manganese ions per subunit.</text>
</comment>
<comment type="induction">
    <text>By heat shock, salt stress, oxidative stress, glucose limitation and oxygen limitation.</text>
</comment>
<comment type="similarity">
    <text evidence="4">Belongs to the manganese catalase family.</text>
</comment>
<gene>
    <name type="primary">ydbD</name>
    <name type="ordered locus">BSU04430</name>
</gene>
<organism>
    <name type="scientific">Bacillus subtilis (strain 168)</name>
    <dbReference type="NCBI Taxonomy" id="224308"/>
    <lineage>
        <taxon>Bacteria</taxon>
        <taxon>Bacillati</taxon>
        <taxon>Bacillota</taxon>
        <taxon>Bacilli</taxon>
        <taxon>Bacillales</taxon>
        <taxon>Bacillaceae</taxon>
        <taxon>Bacillus</taxon>
    </lineage>
</organism>
<reference key="1">
    <citation type="submission" date="1997-03" db="EMBL/GenBank/DDBJ databases">
        <title>A 148 kbp sequence of the region between 35 and 47 degree of the Bacillus subtilis genome.</title>
        <authorList>
            <person name="Kasahara Y."/>
            <person name="Nakai S."/>
            <person name="Lee S."/>
            <person name="Sadaie Y."/>
            <person name="Ogasawara N."/>
        </authorList>
    </citation>
    <scope>NUCLEOTIDE SEQUENCE [GENOMIC DNA]</scope>
    <source>
        <strain>168</strain>
    </source>
</reference>
<reference key="2">
    <citation type="journal article" date="1997" name="Nature">
        <title>The complete genome sequence of the Gram-positive bacterium Bacillus subtilis.</title>
        <authorList>
            <person name="Kunst F."/>
            <person name="Ogasawara N."/>
            <person name="Moszer I."/>
            <person name="Albertini A.M."/>
            <person name="Alloni G."/>
            <person name="Azevedo V."/>
            <person name="Bertero M.G."/>
            <person name="Bessieres P."/>
            <person name="Bolotin A."/>
            <person name="Borchert S."/>
            <person name="Borriss R."/>
            <person name="Boursier L."/>
            <person name="Brans A."/>
            <person name="Braun M."/>
            <person name="Brignell S.C."/>
            <person name="Bron S."/>
            <person name="Brouillet S."/>
            <person name="Bruschi C.V."/>
            <person name="Caldwell B."/>
            <person name="Capuano V."/>
            <person name="Carter N.M."/>
            <person name="Choi S.-K."/>
            <person name="Codani J.-J."/>
            <person name="Connerton I.F."/>
            <person name="Cummings N.J."/>
            <person name="Daniel R.A."/>
            <person name="Denizot F."/>
            <person name="Devine K.M."/>
            <person name="Duesterhoeft A."/>
            <person name="Ehrlich S.D."/>
            <person name="Emmerson P.T."/>
            <person name="Entian K.-D."/>
            <person name="Errington J."/>
            <person name="Fabret C."/>
            <person name="Ferrari E."/>
            <person name="Foulger D."/>
            <person name="Fritz C."/>
            <person name="Fujita M."/>
            <person name="Fujita Y."/>
            <person name="Fuma S."/>
            <person name="Galizzi A."/>
            <person name="Galleron N."/>
            <person name="Ghim S.-Y."/>
            <person name="Glaser P."/>
            <person name="Goffeau A."/>
            <person name="Golightly E.J."/>
            <person name="Grandi G."/>
            <person name="Guiseppi G."/>
            <person name="Guy B.J."/>
            <person name="Haga K."/>
            <person name="Haiech J."/>
            <person name="Harwood C.R."/>
            <person name="Henaut A."/>
            <person name="Hilbert H."/>
            <person name="Holsappel S."/>
            <person name="Hosono S."/>
            <person name="Hullo M.-F."/>
            <person name="Itaya M."/>
            <person name="Jones L.-M."/>
            <person name="Joris B."/>
            <person name="Karamata D."/>
            <person name="Kasahara Y."/>
            <person name="Klaerr-Blanchard M."/>
            <person name="Klein C."/>
            <person name="Kobayashi Y."/>
            <person name="Koetter P."/>
            <person name="Koningstein G."/>
            <person name="Krogh S."/>
            <person name="Kumano M."/>
            <person name="Kurita K."/>
            <person name="Lapidus A."/>
            <person name="Lardinois S."/>
            <person name="Lauber J."/>
            <person name="Lazarevic V."/>
            <person name="Lee S.-M."/>
            <person name="Levine A."/>
            <person name="Liu H."/>
            <person name="Masuda S."/>
            <person name="Mauel C."/>
            <person name="Medigue C."/>
            <person name="Medina N."/>
            <person name="Mellado R.P."/>
            <person name="Mizuno M."/>
            <person name="Moestl D."/>
            <person name="Nakai S."/>
            <person name="Noback M."/>
            <person name="Noone D."/>
            <person name="O'Reilly M."/>
            <person name="Ogawa K."/>
            <person name="Ogiwara A."/>
            <person name="Oudega B."/>
            <person name="Park S.-H."/>
            <person name="Parro V."/>
            <person name="Pohl T.M."/>
            <person name="Portetelle D."/>
            <person name="Porwollik S."/>
            <person name="Prescott A.M."/>
            <person name="Presecan E."/>
            <person name="Pujic P."/>
            <person name="Purnelle B."/>
            <person name="Rapoport G."/>
            <person name="Rey M."/>
            <person name="Reynolds S."/>
            <person name="Rieger M."/>
            <person name="Rivolta C."/>
            <person name="Rocha E."/>
            <person name="Roche B."/>
            <person name="Rose M."/>
            <person name="Sadaie Y."/>
            <person name="Sato T."/>
            <person name="Scanlan E."/>
            <person name="Schleich S."/>
            <person name="Schroeter R."/>
            <person name="Scoffone F."/>
            <person name="Sekiguchi J."/>
            <person name="Sekowska A."/>
            <person name="Seror S.J."/>
            <person name="Serror P."/>
            <person name="Shin B.-S."/>
            <person name="Soldo B."/>
            <person name="Sorokin A."/>
            <person name="Tacconi E."/>
            <person name="Takagi T."/>
            <person name="Takahashi H."/>
            <person name="Takemaru K."/>
            <person name="Takeuchi M."/>
            <person name="Tamakoshi A."/>
            <person name="Tanaka T."/>
            <person name="Terpstra P."/>
            <person name="Tognoni A."/>
            <person name="Tosato V."/>
            <person name="Uchiyama S."/>
            <person name="Vandenbol M."/>
            <person name="Vannier F."/>
            <person name="Vassarotti A."/>
            <person name="Viari A."/>
            <person name="Wambutt R."/>
            <person name="Wedler E."/>
            <person name="Wedler H."/>
            <person name="Weitzenegger T."/>
            <person name="Winters P."/>
            <person name="Wipat A."/>
            <person name="Yamamoto H."/>
            <person name="Yamane K."/>
            <person name="Yasumoto K."/>
            <person name="Yata K."/>
            <person name="Yoshida K."/>
            <person name="Yoshikawa H.-F."/>
            <person name="Zumstein E."/>
            <person name="Yoshikawa H."/>
            <person name="Danchin A."/>
        </authorList>
    </citation>
    <scope>NUCLEOTIDE SEQUENCE [LARGE SCALE GENOMIC DNA]</scope>
    <source>
        <strain>168</strain>
    </source>
</reference>
<reference key="3">
    <citation type="journal article" date="1997" name="Electrophoresis">
        <title>First steps from a two-dimensional protein index towards a response-regulation map for Bacillus subtilis.</title>
        <authorList>
            <person name="Antelmann H."/>
            <person name="Bernhardt J."/>
            <person name="Schmid R."/>
            <person name="Mach H."/>
            <person name="Voelker U."/>
            <person name="Hecker M."/>
        </authorList>
    </citation>
    <scope>PROTEIN SEQUENCE OF 1-29</scope>
    <source>
        <strain>168 / IS58</strain>
    </source>
</reference>
<evidence type="ECO:0000250" key="1">
    <source>
        <dbReference type="UniProtKB" id="A0A7R7ZDZ6"/>
    </source>
</evidence>
<evidence type="ECO:0000250" key="2">
    <source>
        <dbReference type="UniProtKB" id="P60355"/>
    </source>
</evidence>
<evidence type="ECO:0000256" key="3">
    <source>
        <dbReference type="SAM" id="MobiDB-lite"/>
    </source>
</evidence>
<evidence type="ECO:0000305" key="4"/>
<sequence>MFKHTKMLQHPAKPDRPDPLFAKKMQEILGGQFGEISVAMQYLFQGWNTRGNEKYKDLLMDTATEELGHVEMIATMIARLLEDAPLDQQEKAAEDPVIGSILGGMNPHHAIVSGLGAMPESSTGVPWSGGYIVASGNLLADFRANLNAESQGRLQVARLFEMTDDKGVKDMLSFLLARDTMHQNQWLAAIKELEAQEGPVVPGTFPKALEKQEFSHQLINFSEGEVSAEQNWLNEKAPDGEAFEYVKEAKTFGEKPELKPAPPFVHNTLPGRE</sequence>
<dbReference type="EC" id="1.11.1.6" evidence="1"/>
<dbReference type="EMBL" id="AB001488">
    <property type="protein sequence ID" value="BAA19280.1"/>
    <property type="molecule type" value="Genomic_DNA"/>
</dbReference>
<dbReference type="EMBL" id="AL009126">
    <property type="protein sequence ID" value="CAB12250.1"/>
    <property type="molecule type" value="Genomic_DNA"/>
</dbReference>
<dbReference type="PIR" id="G69770">
    <property type="entry name" value="G69770"/>
</dbReference>
<dbReference type="RefSeq" id="NP_388324.1">
    <property type="nucleotide sequence ID" value="NC_000964.3"/>
</dbReference>
<dbReference type="RefSeq" id="WP_003234352.1">
    <property type="nucleotide sequence ID" value="NZ_OZ025638.1"/>
</dbReference>
<dbReference type="SMR" id="P80878"/>
<dbReference type="FunCoup" id="P80878">
    <property type="interactions" value="15"/>
</dbReference>
<dbReference type="STRING" id="224308.BSU04430"/>
<dbReference type="PeroxiBase" id="6145">
    <property type="entry name" value="BsMnCat"/>
</dbReference>
<dbReference type="PaxDb" id="224308-BSU04430"/>
<dbReference type="EnsemblBacteria" id="CAB12250">
    <property type="protein sequence ID" value="CAB12250"/>
    <property type="gene ID" value="BSU_04430"/>
</dbReference>
<dbReference type="GeneID" id="938232"/>
<dbReference type="KEGG" id="bsu:BSU04430"/>
<dbReference type="PATRIC" id="fig|224308.179.peg.469"/>
<dbReference type="eggNOG" id="COG3546">
    <property type="taxonomic scope" value="Bacteria"/>
</dbReference>
<dbReference type="InParanoid" id="P80878"/>
<dbReference type="OrthoDB" id="9800585at2"/>
<dbReference type="PhylomeDB" id="P80878"/>
<dbReference type="BioCyc" id="BSUB:BSU04430-MONOMER"/>
<dbReference type="Proteomes" id="UP000001570">
    <property type="component" value="Chromosome"/>
</dbReference>
<dbReference type="GO" id="GO:0004096">
    <property type="term" value="F:catalase activity"/>
    <property type="evidence" value="ECO:0007669"/>
    <property type="project" value="UniProtKB-EC"/>
</dbReference>
<dbReference type="GO" id="GO:0046872">
    <property type="term" value="F:metal ion binding"/>
    <property type="evidence" value="ECO:0007669"/>
    <property type="project" value="UniProtKB-KW"/>
</dbReference>
<dbReference type="CDD" id="cd01051">
    <property type="entry name" value="Mn_catalase"/>
    <property type="match status" value="1"/>
</dbReference>
<dbReference type="Gene3D" id="1.20.1260.10">
    <property type="match status" value="1"/>
</dbReference>
<dbReference type="Gene3D" id="3.30.1530.10">
    <property type="entry name" value="manganese catalase, domain 2, chain A"/>
    <property type="match status" value="1"/>
</dbReference>
<dbReference type="InterPro" id="IPR012347">
    <property type="entry name" value="Ferritin-like"/>
</dbReference>
<dbReference type="InterPro" id="IPR009078">
    <property type="entry name" value="Ferritin-like_SF"/>
</dbReference>
<dbReference type="InterPro" id="IPR007760">
    <property type="entry name" value="Mn_catalase"/>
</dbReference>
<dbReference type="InterPro" id="IPR027407">
    <property type="entry name" value="Mn_catalase_C"/>
</dbReference>
<dbReference type="InterPro" id="IPR039377">
    <property type="entry name" value="Mn_catalase_dom"/>
</dbReference>
<dbReference type="Pfam" id="PF05067">
    <property type="entry name" value="Mn_catalase"/>
    <property type="match status" value="1"/>
</dbReference>
<dbReference type="SUPFAM" id="SSF47240">
    <property type="entry name" value="Ferritin-like"/>
    <property type="match status" value="1"/>
</dbReference>